<feature type="signal peptide" evidence="1">
    <location>
        <begin position="1"/>
        <end position="28"/>
    </location>
</feature>
<feature type="chain" id="PRO_0000014112" description="UPF0749 protein Rv1825">
    <location>
        <begin position="29"/>
        <end position="292"/>
    </location>
</feature>
<feature type="transmembrane region" description="Helical" evidence="1">
    <location>
        <begin position="68"/>
        <end position="88"/>
    </location>
</feature>
<feature type="transmembrane region" description="Helical" evidence="1">
    <location>
        <begin position="152"/>
        <end position="172"/>
    </location>
</feature>
<feature type="transmembrane region" description="Helical" evidence="1">
    <location>
        <begin position="229"/>
        <end position="249"/>
    </location>
</feature>
<feature type="region of interest" description="Disordered" evidence="2">
    <location>
        <begin position="1"/>
        <end position="30"/>
    </location>
</feature>
<feature type="helix" evidence="4">
    <location>
        <begin position="150"/>
        <end position="157"/>
    </location>
</feature>
<feature type="strand" evidence="4">
    <location>
        <begin position="163"/>
        <end position="173"/>
    </location>
</feature>
<feature type="helix" evidence="4">
    <location>
        <begin position="181"/>
        <end position="193"/>
    </location>
</feature>
<feature type="strand" evidence="4">
    <location>
        <begin position="197"/>
        <end position="202"/>
    </location>
</feature>
<feature type="strand" evidence="4">
    <location>
        <begin position="207"/>
        <end position="209"/>
    </location>
</feature>
<feature type="strand" evidence="4">
    <location>
        <begin position="216"/>
        <end position="219"/>
    </location>
</feature>
<feature type="strand" evidence="4">
    <location>
        <begin position="222"/>
        <end position="225"/>
    </location>
</feature>
<feature type="strand" evidence="4">
    <location>
        <begin position="228"/>
        <end position="230"/>
    </location>
</feature>
<feature type="strand" evidence="4">
    <location>
        <begin position="232"/>
        <end position="240"/>
    </location>
</feature>
<feature type="helix" evidence="4">
    <location>
        <begin position="242"/>
        <end position="249"/>
    </location>
</feature>
<feature type="helix" evidence="4">
    <location>
        <begin position="255"/>
        <end position="261"/>
    </location>
</feature>
<feature type="strand" evidence="4">
    <location>
        <begin position="265"/>
        <end position="276"/>
    </location>
</feature>
<dbReference type="EMBL" id="AL123456">
    <property type="protein sequence ID" value="CCP44591.1"/>
    <property type="molecule type" value="Genomic_DNA"/>
</dbReference>
<dbReference type="PIR" id="B70721">
    <property type="entry name" value="B70721"/>
</dbReference>
<dbReference type="RefSeq" id="NP_216341.1">
    <property type="nucleotide sequence ID" value="NC_000962.3"/>
</dbReference>
<dbReference type="RefSeq" id="WP_003899038.1">
    <property type="nucleotide sequence ID" value="NZ_NVQJ01000013.1"/>
</dbReference>
<dbReference type="PDB" id="3GMG">
    <property type="method" value="X-ray"/>
    <property type="resolution" value="1.50 A"/>
    <property type="chains" value="A/B=133-292"/>
</dbReference>
<dbReference type="PDBsum" id="3GMG"/>
<dbReference type="SMR" id="P9WFG3"/>
<dbReference type="FunCoup" id="P9WFG3">
    <property type="interactions" value="1"/>
</dbReference>
<dbReference type="STRING" id="83332.Rv1825"/>
<dbReference type="PaxDb" id="83332-Rv1825"/>
<dbReference type="DNASU" id="885726"/>
<dbReference type="GeneID" id="885726"/>
<dbReference type="KEGG" id="mtu:Rv1825"/>
<dbReference type="KEGG" id="mtv:RVBD_1825"/>
<dbReference type="TubercuList" id="Rv1825"/>
<dbReference type="eggNOG" id="COG3879">
    <property type="taxonomic scope" value="Bacteria"/>
</dbReference>
<dbReference type="InParanoid" id="P9WFG3"/>
<dbReference type="OrthoDB" id="3211287at2"/>
<dbReference type="PhylomeDB" id="P9WFG3"/>
<dbReference type="EvolutionaryTrace" id="P9WFG3"/>
<dbReference type="Proteomes" id="UP000001584">
    <property type="component" value="Chromosome"/>
</dbReference>
<dbReference type="GO" id="GO:0005886">
    <property type="term" value="C:plasma membrane"/>
    <property type="evidence" value="ECO:0007005"/>
    <property type="project" value="MTBBASE"/>
</dbReference>
<dbReference type="FunFam" id="3.30.70.1880:FF:000002">
    <property type="entry name" value="UPF0749 protein Rv1825"/>
    <property type="match status" value="1"/>
</dbReference>
<dbReference type="Gene3D" id="3.30.70.1880">
    <property type="entry name" value="Protein of unknown function DUF881"/>
    <property type="match status" value="1"/>
</dbReference>
<dbReference type="InterPro" id="IPR010273">
    <property type="entry name" value="DUF881"/>
</dbReference>
<dbReference type="PANTHER" id="PTHR37313">
    <property type="entry name" value="UPF0749 PROTEIN RV1825"/>
    <property type="match status" value="1"/>
</dbReference>
<dbReference type="PANTHER" id="PTHR37313:SF2">
    <property type="entry name" value="UPF0749 PROTEIN YLXX"/>
    <property type="match status" value="1"/>
</dbReference>
<dbReference type="Pfam" id="PF05949">
    <property type="entry name" value="DUF881"/>
    <property type="match status" value="1"/>
</dbReference>
<protein>
    <recommendedName>
        <fullName>UPF0749 protein Rv1825</fullName>
    </recommendedName>
</protein>
<accession>P9WFG3</accession>
<accession>L0T9D2</accession>
<accession>P64895</accession>
<accession>Q50608</accession>
<comment type="subcellular location">
    <subcellularLocation>
        <location evidence="3">Cell membrane</location>
        <topology evidence="3">Multi-pass membrane protein</topology>
    </subcellularLocation>
</comment>
<comment type="similarity">
    <text evidence="3">Belongs to the UPF0749 family.</text>
</comment>
<proteinExistence type="evidence at protein level"/>
<gene>
    <name type="ordered locus">Rv1825</name>
    <name type="ORF">MTCY1A11.18c</name>
</gene>
<sequence>MSENRPEPVAAETSAATTARHSQADAGAHDAVRRGRHELPADHPRSKVGPLRRTRLTEILRGGRSRLVFGTLAILLCLVLGVAIVTQVRQTDSGDSLETARPADLLVLLDSLRQREATLNAEVIDLQNTLNALQASGNTDQAALESAQARLAALSILVGAVGATGPGVMITIDDPGPGVAPEVMIDVINELRAAGAEAIQINDAHRSVRVGVDTWVVGVPGSLTVDTKVLSPPYSILAIGDPPTLAAAMNIPGGAQDGVKRVGGRMVVQQADRVDVTALRQPKQHQYAQPVK</sequence>
<name>Y1825_MYCTU</name>
<reference key="1">
    <citation type="journal article" date="1998" name="Nature">
        <title>Deciphering the biology of Mycobacterium tuberculosis from the complete genome sequence.</title>
        <authorList>
            <person name="Cole S.T."/>
            <person name="Brosch R."/>
            <person name="Parkhill J."/>
            <person name="Garnier T."/>
            <person name="Churcher C.M."/>
            <person name="Harris D.E."/>
            <person name="Gordon S.V."/>
            <person name="Eiglmeier K."/>
            <person name="Gas S."/>
            <person name="Barry C.E. III"/>
            <person name="Tekaia F."/>
            <person name="Badcock K."/>
            <person name="Basham D."/>
            <person name="Brown D."/>
            <person name="Chillingworth T."/>
            <person name="Connor R."/>
            <person name="Davies R.M."/>
            <person name="Devlin K."/>
            <person name="Feltwell T."/>
            <person name="Gentles S."/>
            <person name="Hamlin N."/>
            <person name="Holroyd S."/>
            <person name="Hornsby T."/>
            <person name="Jagels K."/>
            <person name="Krogh A."/>
            <person name="McLean J."/>
            <person name="Moule S."/>
            <person name="Murphy L.D."/>
            <person name="Oliver S."/>
            <person name="Osborne J."/>
            <person name="Quail M.A."/>
            <person name="Rajandream M.A."/>
            <person name="Rogers J."/>
            <person name="Rutter S."/>
            <person name="Seeger K."/>
            <person name="Skelton S."/>
            <person name="Squares S."/>
            <person name="Squares R."/>
            <person name="Sulston J.E."/>
            <person name="Taylor K."/>
            <person name="Whitehead S."/>
            <person name="Barrell B.G."/>
        </authorList>
    </citation>
    <scope>NUCLEOTIDE SEQUENCE [LARGE SCALE GENOMIC DNA]</scope>
    <source>
        <strain>ATCC 25618 / H37Rv</strain>
    </source>
</reference>
<reference key="2">
    <citation type="journal article" date="2011" name="Mol. Cell. Proteomics">
        <title>Proteogenomic analysis of Mycobacterium tuberculosis by high resolution mass spectrometry.</title>
        <authorList>
            <person name="Kelkar D.S."/>
            <person name="Kumar D."/>
            <person name="Kumar P."/>
            <person name="Balakrishnan L."/>
            <person name="Muthusamy B."/>
            <person name="Yadav A.K."/>
            <person name="Shrivastava P."/>
            <person name="Marimuthu A."/>
            <person name="Anand S."/>
            <person name="Sundaram H."/>
            <person name="Kingsbury R."/>
            <person name="Harsha H.C."/>
            <person name="Nair B."/>
            <person name="Prasad T.S."/>
            <person name="Chauhan D.S."/>
            <person name="Katoch K."/>
            <person name="Katoch V.M."/>
            <person name="Kumar P."/>
            <person name="Chaerkady R."/>
            <person name="Ramachandran S."/>
            <person name="Dash D."/>
            <person name="Pandey A."/>
        </authorList>
    </citation>
    <scope>IDENTIFICATION BY MASS SPECTROMETRY [LARGE SCALE ANALYSIS]</scope>
    <source>
        <strain>ATCC 25618 / H37Rv</strain>
    </source>
</reference>
<evidence type="ECO:0000255" key="1"/>
<evidence type="ECO:0000256" key="2">
    <source>
        <dbReference type="SAM" id="MobiDB-lite"/>
    </source>
</evidence>
<evidence type="ECO:0000305" key="3"/>
<evidence type="ECO:0007829" key="4">
    <source>
        <dbReference type="PDB" id="3GMG"/>
    </source>
</evidence>
<organism>
    <name type="scientific">Mycobacterium tuberculosis (strain ATCC 25618 / H37Rv)</name>
    <dbReference type="NCBI Taxonomy" id="83332"/>
    <lineage>
        <taxon>Bacteria</taxon>
        <taxon>Bacillati</taxon>
        <taxon>Actinomycetota</taxon>
        <taxon>Actinomycetes</taxon>
        <taxon>Mycobacteriales</taxon>
        <taxon>Mycobacteriaceae</taxon>
        <taxon>Mycobacterium</taxon>
        <taxon>Mycobacterium tuberculosis complex</taxon>
    </lineage>
</organism>
<keyword id="KW-0002">3D-structure</keyword>
<keyword id="KW-1003">Cell membrane</keyword>
<keyword id="KW-0472">Membrane</keyword>
<keyword id="KW-1185">Reference proteome</keyword>
<keyword id="KW-0732">Signal</keyword>
<keyword id="KW-0812">Transmembrane</keyword>
<keyword id="KW-1133">Transmembrane helix</keyword>